<gene>
    <name evidence="1" type="primary">nrdR</name>
    <name type="ordered locus">OCAR_5861</name>
    <name type="ordered locus">OCA5_c21570</name>
</gene>
<reference key="1">
    <citation type="journal article" date="2008" name="J. Bacteriol.">
        <title>Genome sequence of the chemolithoautotrophic bacterium Oligotropha carboxidovorans OM5T.</title>
        <authorList>
            <person name="Paul D."/>
            <person name="Bridges S."/>
            <person name="Burgess S.C."/>
            <person name="Dandass Y."/>
            <person name="Lawrence M.L."/>
        </authorList>
    </citation>
    <scope>NUCLEOTIDE SEQUENCE [LARGE SCALE GENOMIC DNA]</scope>
    <source>
        <strain>ATCC 49405 / DSM 1227 / KCTC 32145 / OM5</strain>
    </source>
</reference>
<reference key="2">
    <citation type="journal article" date="2011" name="J. Bacteriol.">
        <title>Complete genome sequences of the chemolithoautotrophic Oligotropha carboxidovorans strains OM4 and OM5.</title>
        <authorList>
            <person name="Volland S."/>
            <person name="Rachinger M."/>
            <person name="Strittmatter A."/>
            <person name="Daniel R."/>
            <person name="Gottschalk G."/>
            <person name="Meyer O."/>
        </authorList>
    </citation>
    <scope>NUCLEOTIDE SEQUENCE [LARGE SCALE GENOMIC DNA]</scope>
    <source>
        <strain>ATCC 49405 / DSM 1227 / KCTC 32145 / OM5</strain>
    </source>
</reference>
<feature type="chain" id="PRO_1000124527" description="Transcriptional repressor NrdR">
    <location>
        <begin position="1"/>
        <end position="158"/>
    </location>
</feature>
<feature type="domain" description="ATP-cone" evidence="1">
    <location>
        <begin position="49"/>
        <end position="139"/>
    </location>
</feature>
<feature type="zinc finger region" evidence="1">
    <location>
        <begin position="3"/>
        <end position="34"/>
    </location>
</feature>
<feature type="region of interest" description="Disordered" evidence="2">
    <location>
        <begin position="1"/>
        <end position="20"/>
    </location>
</feature>
<accession>B6JGI0</accession>
<accession>F8BXM3</accession>
<name>NRDR_AFIC5</name>
<dbReference type="EMBL" id="CP001196">
    <property type="protein sequence ID" value="ACI92986.1"/>
    <property type="molecule type" value="Genomic_DNA"/>
</dbReference>
<dbReference type="EMBL" id="CP002826">
    <property type="protein sequence ID" value="AEI06860.1"/>
    <property type="molecule type" value="Genomic_DNA"/>
</dbReference>
<dbReference type="RefSeq" id="WP_012563013.1">
    <property type="nucleotide sequence ID" value="NC_015684.1"/>
</dbReference>
<dbReference type="SMR" id="B6JGI0"/>
<dbReference type="STRING" id="504832.OCA5_c21570"/>
<dbReference type="KEGG" id="oca:OCAR_5861"/>
<dbReference type="KEGG" id="ocg:OCA5_c21570"/>
<dbReference type="PATRIC" id="fig|504832.7.peg.2278"/>
<dbReference type="eggNOG" id="COG1327">
    <property type="taxonomic scope" value="Bacteria"/>
</dbReference>
<dbReference type="HOGENOM" id="CLU_108412_0_1_5"/>
<dbReference type="OrthoDB" id="9807461at2"/>
<dbReference type="Proteomes" id="UP000007730">
    <property type="component" value="Chromosome"/>
</dbReference>
<dbReference type="GO" id="GO:0005524">
    <property type="term" value="F:ATP binding"/>
    <property type="evidence" value="ECO:0007669"/>
    <property type="project" value="UniProtKB-KW"/>
</dbReference>
<dbReference type="GO" id="GO:0003677">
    <property type="term" value="F:DNA binding"/>
    <property type="evidence" value="ECO:0007669"/>
    <property type="project" value="UniProtKB-KW"/>
</dbReference>
<dbReference type="GO" id="GO:0008270">
    <property type="term" value="F:zinc ion binding"/>
    <property type="evidence" value="ECO:0007669"/>
    <property type="project" value="UniProtKB-UniRule"/>
</dbReference>
<dbReference type="GO" id="GO:0045892">
    <property type="term" value="P:negative regulation of DNA-templated transcription"/>
    <property type="evidence" value="ECO:0007669"/>
    <property type="project" value="UniProtKB-UniRule"/>
</dbReference>
<dbReference type="HAMAP" id="MF_00440">
    <property type="entry name" value="NrdR"/>
    <property type="match status" value="1"/>
</dbReference>
<dbReference type="InterPro" id="IPR005144">
    <property type="entry name" value="ATP-cone_dom"/>
</dbReference>
<dbReference type="InterPro" id="IPR055173">
    <property type="entry name" value="NrdR-like_N"/>
</dbReference>
<dbReference type="InterPro" id="IPR003796">
    <property type="entry name" value="RNR_NrdR-like"/>
</dbReference>
<dbReference type="NCBIfam" id="TIGR00244">
    <property type="entry name" value="transcriptional regulator NrdR"/>
    <property type="match status" value="1"/>
</dbReference>
<dbReference type="PANTHER" id="PTHR30455">
    <property type="entry name" value="TRANSCRIPTIONAL REPRESSOR NRDR"/>
    <property type="match status" value="1"/>
</dbReference>
<dbReference type="PANTHER" id="PTHR30455:SF2">
    <property type="entry name" value="TRANSCRIPTIONAL REPRESSOR NRDR"/>
    <property type="match status" value="1"/>
</dbReference>
<dbReference type="Pfam" id="PF03477">
    <property type="entry name" value="ATP-cone"/>
    <property type="match status" value="1"/>
</dbReference>
<dbReference type="Pfam" id="PF22811">
    <property type="entry name" value="Zn_ribbon_NrdR"/>
    <property type="match status" value="1"/>
</dbReference>
<dbReference type="PROSITE" id="PS51161">
    <property type="entry name" value="ATP_CONE"/>
    <property type="match status" value="1"/>
</dbReference>
<evidence type="ECO:0000255" key="1">
    <source>
        <dbReference type="HAMAP-Rule" id="MF_00440"/>
    </source>
</evidence>
<evidence type="ECO:0000256" key="2">
    <source>
        <dbReference type="SAM" id="MobiDB-lite"/>
    </source>
</evidence>
<proteinExistence type="inferred from homology"/>
<comment type="function">
    <text evidence="1">Negatively regulates transcription of bacterial ribonucleotide reductase nrd genes and operons by binding to NrdR-boxes.</text>
</comment>
<comment type="cofactor">
    <cofactor evidence="1">
        <name>Zn(2+)</name>
        <dbReference type="ChEBI" id="CHEBI:29105"/>
    </cofactor>
    <text evidence="1">Binds 1 zinc ion.</text>
</comment>
<comment type="similarity">
    <text evidence="1">Belongs to the NrdR family.</text>
</comment>
<keyword id="KW-0067">ATP-binding</keyword>
<keyword id="KW-0238">DNA-binding</keyword>
<keyword id="KW-0479">Metal-binding</keyword>
<keyword id="KW-0547">Nucleotide-binding</keyword>
<keyword id="KW-1185">Reference proteome</keyword>
<keyword id="KW-0678">Repressor</keyword>
<keyword id="KW-0804">Transcription</keyword>
<keyword id="KW-0805">Transcription regulation</keyword>
<keyword id="KW-0862">Zinc</keyword>
<keyword id="KW-0863">Zinc-finger</keyword>
<protein>
    <recommendedName>
        <fullName evidence="1">Transcriptional repressor NrdR</fullName>
    </recommendedName>
</protein>
<sequence length="158" mass="18420">MRCPSCGSLDTQVKDSRPTEDSSVIRRRRVCLTCNFRFTTFERVQLRELTVIKRNGRRVPFDRDKLVRSLQISLRKRPVETERLEKMVSTIVRELESSGEAEISSEMIGEIVMENLRQLDDVAYVRFASVYRNFREAKDFETVLGELSDEGLPTNVRK</sequence>
<organism>
    <name type="scientific">Afipia carboxidovorans (strain ATCC 49405 / DSM 1227 / KCTC 32145 / OM5)</name>
    <name type="common">Oligotropha carboxidovorans</name>
    <dbReference type="NCBI Taxonomy" id="504832"/>
    <lineage>
        <taxon>Bacteria</taxon>
        <taxon>Pseudomonadati</taxon>
        <taxon>Pseudomonadota</taxon>
        <taxon>Alphaproteobacteria</taxon>
        <taxon>Hyphomicrobiales</taxon>
        <taxon>Nitrobacteraceae</taxon>
        <taxon>Afipia</taxon>
    </lineage>
</organism>